<gene>
    <name type="ordered locus">Rmet_1319</name>
</gene>
<sequence>MNLQGKKITVHDMTLRDGMHPKRHMMTLEQMKSIACGLDAAGVPLIEVTHGDGLGGSSVNYGFPAHSDEEYLGAVIPLMKQAKVSALLLPGIGTVDHLKMAKELGVHTIRVATHCTEADVSEQHIALARKLEMDTVGFLMMAHMNSPEGLVGQAKLMESYGANCVYITDSAGYMLPDDVRARLGAVREALKPETELGFHGHHNLAMGIANSIAAVECGATRIDAASAGLGAGAGNTPMEVLVAVCDRMGIQTGVDVWAIQDVAEDLVVPIMDFPIRIDRDSLTLGYAGVYGSFLLFAKRAERKYGVPAREILVELGRRGMVGGQEDMIEDTAITLAKARASKAQKVAA</sequence>
<accession>Q1LNS4</accession>
<protein>
    <recommendedName>
        <fullName evidence="1">4-hydroxy-2-oxovalerate aldolase 1</fullName>
        <shortName evidence="1">HOA 1</shortName>
        <ecNumber evidence="1">4.1.3.39</ecNumber>
    </recommendedName>
    <alternativeName>
        <fullName evidence="1">4-hydroxy-2-keto-pentanoic acid aldolase 1</fullName>
    </alternativeName>
    <alternativeName>
        <fullName evidence="1">4-hydroxy-2-oxopentanoate aldolase 1</fullName>
    </alternativeName>
</protein>
<comment type="catalytic activity">
    <reaction evidence="1">
        <text>(S)-4-hydroxy-2-oxopentanoate = acetaldehyde + pyruvate</text>
        <dbReference type="Rhea" id="RHEA:22624"/>
        <dbReference type="ChEBI" id="CHEBI:15343"/>
        <dbReference type="ChEBI" id="CHEBI:15361"/>
        <dbReference type="ChEBI" id="CHEBI:73143"/>
        <dbReference type="EC" id="4.1.3.39"/>
    </reaction>
</comment>
<comment type="similarity">
    <text evidence="1">Belongs to the 4-hydroxy-2-oxovalerate aldolase family.</text>
</comment>
<keyword id="KW-0058">Aromatic hydrocarbons catabolism</keyword>
<keyword id="KW-0456">Lyase</keyword>
<keyword id="KW-0464">Manganese</keyword>
<keyword id="KW-0479">Metal-binding</keyword>
<keyword id="KW-1185">Reference proteome</keyword>
<reference key="1">
    <citation type="journal article" date="2010" name="PLoS ONE">
        <title>The complete genome sequence of Cupriavidus metallidurans strain CH34, a master survivalist in harsh and anthropogenic environments.</title>
        <authorList>
            <person name="Janssen P.J."/>
            <person name="Van Houdt R."/>
            <person name="Moors H."/>
            <person name="Monsieurs P."/>
            <person name="Morin N."/>
            <person name="Michaux A."/>
            <person name="Benotmane M.A."/>
            <person name="Leys N."/>
            <person name="Vallaeys T."/>
            <person name="Lapidus A."/>
            <person name="Monchy S."/>
            <person name="Medigue C."/>
            <person name="Taghavi S."/>
            <person name="McCorkle S."/>
            <person name="Dunn J."/>
            <person name="van der Lelie D."/>
            <person name="Mergeay M."/>
        </authorList>
    </citation>
    <scope>NUCLEOTIDE SEQUENCE [LARGE SCALE GENOMIC DNA]</scope>
    <source>
        <strain>ATCC 43123 / DSM 2839 / NBRC 102507 / CH34</strain>
    </source>
</reference>
<evidence type="ECO:0000255" key="1">
    <source>
        <dbReference type="HAMAP-Rule" id="MF_01656"/>
    </source>
</evidence>
<proteinExistence type="inferred from homology"/>
<organism>
    <name type="scientific">Cupriavidus metallidurans (strain ATCC 43123 / DSM 2839 / NBRC 102507 / CH34)</name>
    <name type="common">Ralstonia metallidurans</name>
    <dbReference type="NCBI Taxonomy" id="266264"/>
    <lineage>
        <taxon>Bacteria</taxon>
        <taxon>Pseudomonadati</taxon>
        <taxon>Pseudomonadota</taxon>
        <taxon>Betaproteobacteria</taxon>
        <taxon>Burkholderiales</taxon>
        <taxon>Burkholderiaceae</taxon>
        <taxon>Cupriavidus</taxon>
    </lineage>
</organism>
<feature type="chain" id="PRO_0000387890" description="4-hydroxy-2-oxovalerate aldolase 1">
    <location>
        <begin position="1"/>
        <end position="348"/>
    </location>
</feature>
<feature type="domain" description="Pyruvate carboxyltransferase" evidence="1">
    <location>
        <begin position="8"/>
        <end position="260"/>
    </location>
</feature>
<feature type="active site" description="Proton acceptor" evidence="1">
    <location>
        <position position="20"/>
    </location>
</feature>
<feature type="binding site" evidence="1">
    <location>
        <begin position="16"/>
        <end position="17"/>
    </location>
    <ligand>
        <name>substrate</name>
    </ligand>
</feature>
<feature type="binding site" evidence="1">
    <location>
        <position position="17"/>
    </location>
    <ligand>
        <name>Mn(2+)</name>
        <dbReference type="ChEBI" id="CHEBI:29035"/>
    </ligand>
</feature>
<feature type="binding site" evidence="1">
    <location>
        <position position="170"/>
    </location>
    <ligand>
        <name>substrate</name>
    </ligand>
</feature>
<feature type="binding site" evidence="1">
    <location>
        <position position="199"/>
    </location>
    <ligand>
        <name>Mn(2+)</name>
        <dbReference type="ChEBI" id="CHEBI:29035"/>
    </ligand>
</feature>
<feature type="binding site" evidence="1">
    <location>
        <position position="199"/>
    </location>
    <ligand>
        <name>substrate</name>
    </ligand>
</feature>
<feature type="binding site" evidence="1">
    <location>
        <position position="201"/>
    </location>
    <ligand>
        <name>Mn(2+)</name>
        <dbReference type="ChEBI" id="CHEBI:29035"/>
    </ligand>
</feature>
<feature type="binding site" evidence="1">
    <location>
        <position position="290"/>
    </location>
    <ligand>
        <name>substrate</name>
    </ligand>
</feature>
<feature type="site" description="Transition state stabilizer" evidence="1">
    <location>
        <position position="16"/>
    </location>
</feature>
<name>HOA1_CUPMC</name>
<dbReference type="EC" id="4.1.3.39" evidence="1"/>
<dbReference type="EMBL" id="CP000352">
    <property type="protein sequence ID" value="ABF08202.1"/>
    <property type="molecule type" value="Genomic_DNA"/>
</dbReference>
<dbReference type="SMR" id="Q1LNS4"/>
<dbReference type="STRING" id="266264.Rmet_1319"/>
<dbReference type="KEGG" id="rme:Rmet_1319"/>
<dbReference type="eggNOG" id="COG0119">
    <property type="taxonomic scope" value="Bacteria"/>
</dbReference>
<dbReference type="HOGENOM" id="CLU_049173_0_0_4"/>
<dbReference type="Proteomes" id="UP000002429">
    <property type="component" value="Chromosome"/>
</dbReference>
<dbReference type="GO" id="GO:0003852">
    <property type="term" value="F:2-isopropylmalate synthase activity"/>
    <property type="evidence" value="ECO:0007669"/>
    <property type="project" value="TreeGrafter"/>
</dbReference>
<dbReference type="GO" id="GO:0008701">
    <property type="term" value="F:4-hydroxy-2-oxovalerate aldolase activity"/>
    <property type="evidence" value="ECO:0007669"/>
    <property type="project" value="UniProtKB-UniRule"/>
</dbReference>
<dbReference type="GO" id="GO:0030145">
    <property type="term" value="F:manganese ion binding"/>
    <property type="evidence" value="ECO:0007669"/>
    <property type="project" value="UniProtKB-UniRule"/>
</dbReference>
<dbReference type="GO" id="GO:0009056">
    <property type="term" value="P:catabolic process"/>
    <property type="evidence" value="ECO:0007669"/>
    <property type="project" value="UniProtKB-KW"/>
</dbReference>
<dbReference type="GO" id="GO:0009098">
    <property type="term" value="P:L-leucine biosynthetic process"/>
    <property type="evidence" value="ECO:0007669"/>
    <property type="project" value="TreeGrafter"/>
</dbReference>
<dbReference type="CDD" id="cd07943">
    <property type="entry name" value="DRE_TIM_HOA"/>
    <property type="match status" value="1"/>
</dbReference>
<dbReference type="Gene3D" id="1.10.8.60">
    <property type="match status" value="1"/>
</dbReference>
<dbReference type="Gene3D" id="3.20.20.70">
    <property type="entry name" value="Aldolase class I"/>
    <property type="match status" value="1"/>
</dbReference>
<dbReference type="HAMAP" id="MF_01656">
    <property type="entry name" value="HOA"/>
    <property type="match status" value="1"/>
</dbReference>
<dbReference type="InterPro" id="IPR050073">
    <property type="entry name" value="2-IPM_HCS-like"/>
</dbReference>
<dbReference type="InterPro" id="IPR017629">
    <property type="entry name" value="4OH_2_O-val_aldolase"/>
</dbReference>
<dbReference type="InterPro" id="IPR013785">
    <property type="entry name" value="Aldolase_TIM"/>
</dbReference>
<dbReference type="InterPro" id="IPR012425">
    <property type="entry name" value="DmpG_comm"/>
</dbReference>
<dbReference type="InterPro" id="IPR035685">
    <property type="entry name" value="DRE_TIM_HOA"/>
</dbReference>
<dbReference type="InterPro" id="IPR000891">
    <property type="entry name" value="PYR_CT"/>
</dbReference>
<dbReference type="NCBIfam" id="TIGR03217">
    <property type="entry name" value="4OH_2_O_val_ald"/>
    <property type="match status" value="1"/>
</dbReference>
<dbReference type="NCBIfam" id="NF006049">
    <property type="entry name" value="PRK08195.1"/>
    <property type="match status" value="1"/>
</dbReference>
<dbReference type="PANTHER" id="PTHR10277:SF9">
    <property type="entry name" value="2-ISOPROPYLMALATE SYNTHASE 1, CHLOROPLASTIC-RELATED"/>
    <property type="match status" value="1"/>
</dbReference>
<dbReference type="PANTHER" id="PTHR10277">
    <property type="entry name" value="HOMOCITRATE SYNTHASE-RELATED"/>
    <property type="match status" value="1"/>
</dbReference>
<dbReference type="Pfam" id="PF07836">
    <property type="entry name" value="DmpG_comm"/>
    <property type="match status" value="1"/>
</dbReference>
<dbReference type="Pfam" id="PF00682">
    <property type="entry name" value="HMGL-like"/>
    <property type="match status" value="1"/>
</dbReference>
<dbReference type="SUPFAM" id="SSF51569">
    <property type="entry name" value="Aldolase"/>
    <property type="match status" value="1"/>
</dbReference>
<dbReference type="SUPFAM" id="SSF89000">
    <property type="entry name" value="post-HMGL domain-like"/>
    <property type="match status" value="1"/>
</dbReference>
<dbReference type="PROSITE" id="PS50991">
    <property type="entry name" value="PYR_CT"/>
    <property type="match status" value="1"/>
</dbReference>